<gene>
    <name type="ordered locus">Xaut_1023</name>
</gene>
<evidence type="ECO:0000255" key="1">
    <source>
        <dbReference type="HAMAP-Rule" id="MF_01017"/>
    </source>
</evidence>
<comment type="catalytic activity">
    <reaction evidence="1">
        <text>a quinone + NADH + H(+) = a quinol + NAD(+)</text>
        <dbReference type="Rhea" id="RHEA:46160"/>
        <dbReference type="ChEBI" id="CHEBI:15378"/>
        <dbReference type="ChEBI" id="CHEBI:24646"/>
        <dbReference type="ChEBI" id="CHEBI:57540"/>
        <dbReference type="ChEBI" id="CHEBI:57945"/>
        <dbReference type="ChEBI" id="CHEBI:132124"/>
        <dbReference type="EC" id="1.6.5.2"/>
    </reaction>
</comment>
<comment type="catalytic activity">
    <reaction evidence="1">
        <text>a quinone + NADPH + H(+) = a quinol + NADP(+)</text>
        <dbReference type="Rhea" id="RHEA:46164"/>
        <dbReference type="ChEBI" id="CHEBI:15378"/>
        <dbReference type="ChEBI" id="CHEBI:24646"/>
        <dbReference type="ChEBI" id="CHEBI:57783"/>
        <dbReference type="ChEBI" id="CHEBI:58349"/>
        <dbReference type="ChEBI" id="CHEBI:132124"/>
        <dbReference type="EC" id="1.6.5.2"/>
    </reaction>
</comment>
<comment type="cofactor">
    <cofactor evidence="1">
        <name>FMN</name>
        <dbReference type="ChEBI" id="CHEBI:58210"/>
    </cofactor>
    <text evidence="1">Binds 1 FMN per monomer.</text>
</comment>
<comment type="similarity">
    <text evidence="1">Belongs to the WrbA family.</text>
</comment>
<feature type="chain" id="PRO_1000200648" description="NAD(P)H dehydrogenase (quinone)">
    <location>
        <begin position="1"/>
        <end position="199"/>
    </location>
</feature>
<feature type="domain" description="Flavodoxin-like" evidence="1">
    <location>
        <begin position="4"/>
        <end position="190"/>
    </location>
</feature>
<feature type="binding site" evidence="1">
    <location>
        <begin position="10"/>
        <end position="15"/>
    </location>
    <ligand>
        <name>FMN</name>
        <dbReference type="ChEBI" id="CHEBI:58210"/>
    </ligand>
</feature>
<feature type="binding site" evidence="1">
    <location>
        <position position="12"/>
    </location>
    <ligand>
        <name>NAD(+)</name>
        <dbReference type="ChEBI" id="CHEBI:57540"/>
    </ligand>
</feature>
<feature type="binding site" evidence="1">
    <location>
        <begin position="78"/>
        <end position="80"/>
    </location>
    <ligand>
        <name>FMN</name>
        <dbReference type="ChEBI" id="CHEBI:58210"/>
    </ligand>
</feature>
<feature type="binding site" evidence="1">
    <location>
        <position position="98"/>
    </location>
    <ligand>
        <name>substrate</name>
    </ligand>
</feature>
<feature type="binding site" evidence="1">
    <location>
        <begin position="113"/>
        <end position="119"/>
    </location>
    <ligand>
        <name>FMN</name>
        <dbReference type="ChEBI" id="CHEBI:58210"/>
    </ligand>
</feature>
<feature type="binding site" evidence="1">
    <location>
        <position position="134"/>
    </location>
    <ligand>
        <name>FMN</name>
        <dbReference type="ChEBI" id="CHEBI:58210"/>
    </ligand>
</feature>
<accession>A7IE31</accession>
<name>NQOR_XANP2</name>
<organism>
    <name type="scientific">Xanthobacter autotrophicus (strain ATCC BAA-1158 / Py2)</name>
    <dbReference type="NCBI Taxonomy" id="78245"/>
    <lineage>
        <taxon>Bacteria</taxon>
        <taxon>Pseudomonadati</taxon>
        <taxon>Pseudomonadota</taxon>
        <taxon>Alphaproteobacteria</taxon>
        <taxon>Hyphomicrobiales</taxon>
        <taxon>Xanthobacteraceae</taxon>
        <taxon>Xanthobacter</taxon>
    </lineage>
</organism>
<keyword id="KW-0285">Flavoprotein</keyword>
<keyword id="KW-0288">FMN</keyword>
<keyword id="KW-0520">NAD</keyword>
<keyword id="KW-0521">NADP</keyword>
<keyword id="KW-0547">Nucleotide-binding</keyword>
<keyword id="KW-0560">Oxidoreductase</keyword>
<keyword id="KW-1185">Reference proteome</keyword>
<reference key="1">
    <citation type="submission" date="2007-07" db="EMBL/GenBank/DDBJ databases">
        <title>Complete sequence of chromosome of Xanthobacter autotrophicus Py2.</title>
        <authorList>
            <consortium name="US DOE Joint Genome Institute"/>
            <person name="Copeland A."/>
            <person name="Lucas S."/>
            <person name="Lapidus A."/>
            <person name="Barry K."/>
            <person name="Glavina del Rio T."/>
            <person name="Hammon N."/>
            <person name="Israni S."/>
            <person name="Dalin E."/>
            <person name="Tice H."/>
            <person name="Pitluck S."/>
            <person name="Sims D."/>
            <person name="Brettin T."/>
            <person name="Bruce D."/>
            <person name="Detter J.C."/>
            <person name="Han C."/>
            <person name="Tapia R."/>
            <person name="Brainard J."/>
            <person name="Schmutz J."/>
            <person name="Larimer F."/>
            <person name="Land M."/>
            <person name="Hauser L."/>
            <person name="Kyrpides N."/>
            <person name="Kim E."/>
            <person name="Ensigns S.A."/>
            <person name="Richardson P."/>
        </authorList>
    </citation>
    <scope>NUCLEOTIDE SEQUENCE [LARGE SCALE GENOMIC DNA]</scope>
    <source>
        <strain>ATCC BAA-1158 / Py2</strain>
    </source>
</reference>
<protein>
    <recommendedName>
        <fullName evidence="1">NAD(P)H dehydrogenase (quinone)</fullName>
        <ecNumber evidence="1">1.6.5.2</ecNumber>
    </recommendedName>
    <alternativeName>
        <fullName>Flavoprotein WrbA</fullName>
    </alternativeName>
    <alternativeName>
        <fullName evidence="1">NAD(P)H:quinone oxidoreductase</fullName>
        <shortName evidence="1">NQO</shortName>
    </alternativeName>
</protein>
<proteinExistence type="inferred from homology"/>
<sequence length="199" mass="20824">MAKVLVLYYSAYGHIEQMAEAAAAGAREAGATVDIKRVPDLVPEEVAKSAHFKLDQKAPIATVAELAEYDAIIVGVGTRFGRMASQMANFLDQAGGLWARGALNGKVGGAFTSTATQHGGQEVTLFSIITNLMHFGMVIVGLDYGYGAQMTLDEVTGGSPYGATTITGGDGSRQPSAIELDGARYQGRKIAETAIKLHG</sequence>
<dbReference type="EC" id="1.6.5.2" evidence="1"/>
<dbReference type="EMBL" id="CP000781">
    <property type="protein sequence ID" value="ABS66274.1"/>
    <property type="molecule type" value="Genomic_DNA"/>
</dbReference>
<dbReference type="SMR" id="A7IE31"/>
<dbReference type="STRING" id="78245.Xaut_1023"/>
<dbReference type="CAZy" id="AA6">
    <property type="family name" value="Auxiliary Activities 6"/>
</dbReference>
<dbReference type="KEGG" id="xau:Xaut_1023"/>
<dbReference type="eggNOG" id="COG0655">
    <property type="taxonomic scope" value="Bacteria"/>
</dbReference>
<dbReference type="HOGENOM" id="CLU_051402_0_2_5"/>
<dbReference type="OrthoDB" id="9801479at2"/>
<dbReference type="PhylomeDB" id="A7IE31"/>
<dbReference type="Proteomes" id="UP000002417">
    <property type="component" value="Chromosome"/>
</dbReference>
<dbReference type="GO" id="GO:0016020">
    <property type="term" value="C:membrane"/>
    <property type="evidence" value="ECO:0007669"/>
    <property type="project" value="TreeGrafter"/>
</dbReference>
<dbReference type="GO" id="GO:0050660">
    <property type="term" value="F:flavin adenine dinucleotide binding"/>
    <property type="evidence" value="ECO:0007669"/>
    <property type="project" value="UniProtKB-UniRule"/>
</dbReference>
<dbReference type="GO" id="GO:0010181">
    <property type="term" value="F:FMN binding"/>
    <property type="evidence" value="ECO:0007669"/>
    <property type="project" value="InterPro"/>
</dbReference>
<dbReference type="GO" id="GO:0051287">
    <property type="term" value="F:NAD binding"/>
    <property type="evidence" value="ECO:0007669"/>
    <property type="project" value="UniProtKB-UniRule"/>
</dbReference>
<dbReference type="GO" id="GO:0050136">
    <property type="term" value="F:NADH:ubiquinone reductase (non-electrogenic) activity"/>
    <property type="evidence" value="ECO:0007669"/>
    <property type="project" value="RHEA"/>
</dbReference>
<dbReference type="GO" id="GO:0050661">
    <property type="term" value="F:NADP binding"/>
    <property type="evidence" value="ECO:0007669"/>
    <property type="project" value="UniProtKB-UniRule"/>
</dbReference>
<dbReference type="GO" id="GO:0008753">
    <property type="term" value="F:NADPH dehydrogenase (quinone) activity"/>
    <property type="evidence" value="ECO:0007669"/>
    <property type="project" value="RHEA"/>
</dbReference>
<dbReference type="FunFam" id="3.40.50.360:FF:000001">
    <property type="entry name" value="NAD(P)H dehydrogenase (Quinone) FQR1-like"/>
    <property type="match status" value="1"/>
</dbReference>
<dbReference type="Gene3D" id="3.40.50.360">
    <property type="match status" value="1"/>
</dbReference>
<dbReference type="HAMAP" id="MF_01017">
    <property type="entry name" value="NQOR"/>
    <property type="match status" value="1"/>
</dbReference>
<dbReference type="InterPro" id="IPR008254">
    <property type="entry name" value="Flavodoxin/NO_synth"/>
</dbReference>
<dbReference type="InterPro" id="IPR029039">
    <property type="entry name" value="Flavoprotein-like_sf"/>
</dbReference>
<dbReference type="InterPro" id="IPR010089">
    <property type="entry name" value="Flavoprotein_WrbA-like"/>
</dbReference>
<dbReference type="InterPro" id="IPR005025">
    <property type="entry name" value="FMN_Rdtase-like_dom"/>
</dbReference>
<dbReference type="InterPro" id="IPR037513">
    <property type="entry name" value="NQO"/>
</dbReference>
<dbReference type="NCBIfam" id="TIGR01755">
    <property type="entry name" value="flav_wrbA"/>
    <property type="match status" value="1"/>
</dbReference>
<dbReference type="NCBIfam" id="NF002999">
    <property type="entry name" value="PRK03767.1"/>
    <property type="match status" value="1"/>
</dbReference>
<dbReference type="PANTHER" id="PTHR30546">
    <property type="entry name" value="FLAVODOXIN-RELATED PROTEIN WRBA-RELATED"/>
    <property type="match status" value="1"/>
</dbReference>
<dbReference type="PANTHER" id="PTHR30546:SF23">
    <property type="entry name" value="FLAVOPROTEIN-LIKE PROTEIN YCP4-RELATED"/>
    <property type="match status" value="1"/>
</dbReference>
<dbReference type="Pfam" id="PF03358">
    <property type="entry name" value="FMN_red"/>
    <property type="match status" value="1"/>
</dbReference>
<dbReference type="SUPFAM" id="SSF52218">
    <property type="entry name" value="Flavoproteins"/>
    <property type="match status" value="1"/>
</dbReference>
<dbReference type="PROSITE" id="PS50902">
    <property type="entry name" value="FLAVODOXIN_LIKE"/>
    <property type="match status" value="1"/>
</dbReference>